<gene>
    <name evidence="1" type="primary">tyrS</name>
    <name type="ordered locus">CV_3072</name>
</gene>
<sequence>MTQTALLQDLEARGLIAQTTDMAALQELLNKESVTLYCGFDPTADSLHIGSLVPILMLKRFQQAGHRPVALVGGATGMIGDPSFKAAERKLNTPDVIEGWVEKIRKQVEPFLSFEGENAAVMANNYDWFGKMNALEFLRDIGKHFSVNAMIKKESVQQRINRDDQGISYTEFSYSLLQGYDFAELNQRLGCKLQIGGSDQWGNITAGTDLTRRLNQTQVYGLTMPLVTKADGTKFGKTESGTIWLDAKKTSPYAFYQFWLGTADADVYKFLRYFSFLSVDEIASIEEADKSREGKPEGQRILAEQVTELVHGKAALEAAQRITHSLFSNDLTNLTADDFAQLAQDGLPTIKLDKSASGLIDALAAGGLAKSKSEARTFIQSGAVSVNGIKVDSLEHAIGDGERLFGQYSLLKRGKKLYALVDWQ</sequence>
<protein>
    <recommendedName>
        <fullName evidence="1">Tyrosine--tRNA ligase</fullName>
        <ecNumber evidence="1">6.1.1.1</ecNumber>
    </recommendedName>
    <alternativeName>
        <fullName evidence="1">Tyrosyl-tRNA synthetase</fullName>
        <shortName evidence="1">TyrRS</shortName>
    </alternativeName>
</protein>
<reference key="1">
    <citation type="journal article" date="2003" name="Proc. Natl. Acad. Sci. U.S.A.">
        <title>The complete genome sequence of Chromobacterium violaceum reveals remarkable and exploitable bacterial adaptability.</title>
        <authorList>
            <person name="Vasconcelos A.T.R."/>
            <person name="de Almeida D.F."/>
            <person name="Hungria M."/>
            <person name="Guimaraes C.T."/>
            <person name="Antonio R.V."/>
            <person name="Almeida F.C."/>
            <person name="de Almeida L.G.P."/>
            <person name="de Almeida R."/>
            <person name="Alves-Gomes J.A."/>
            <person name="Andrade E.M."/>
            <person name="Araripe J."/>
            <person name="de Araujo M.F.F."/>
            <person name="Astolfi-Filho S."/>
            <person name="Azevedo V."/>
            <person name="Baptista A.J."/>
            <person name="Bataus L.A.M."/>
            <person name="Batista J.S."/>
            <person name="Belo A."/>
            <person name="van den Berg C."/>
            <person name="Bogo M."/>
            <person name="Bonatto S."/>
            <person name="Bordignon J."/>
            <person name="Brigido M.M."/>
            <person name="Brito C.A."/>
            <person name="Brocchi M."/>
            <person name="Burity H.A."/>
            <person name="Camargo A.A."/>
            <person name="Cardoso D.D.P."/>
            <person name="Carneiro N.P."/>
            <person name="Carraro D.M."/>
            <person name="Carvalho C.M.B."/>
            <person name="Cascardo J.C.M."/>
            <person name="Cavada B.S."/>
            <person name="Chueire L.M.O."/>
            <person name="Creczynski-Pasa T.B."/>
            <person name="Cunha-Junior N.C."/>
            <person name="Fagundes N."/>
            <person name="Falcao C.L."/>
            <person name="Fantinatti F."/>
            <person name="Farias I.P."/>
            <person name="Felipe M.S.S."/>
            <person name="Ferrari L.P."/>
            <person name="Ferro J.A."/>
            <person name="Ferro M.I.T."/>
            <person name="Franco G.R."/>
            <person name="Freitas N.S.A."/>
            <person name="Furlan L.R."/>
            <person name="Gazzinelli R.T."/>
            <person name="Gomes E.A."/>
            <person name="Goncalves P.R."/>
            <person name="Grangeiro T.B."/>
            <person name="Grattapaglia D."/>
            <person name="Grisard E.C."/>
            <person name="Hanna E.S."/>
            <person name="Jardim S.N."/>
            <person name="Laurino J."/>
            <person name="Leoi L.C.T."/>
            <person name="Lima L.F.A."/>
            <person name="Loureiro M.F."/>
            <person name="Lyra M.C.C.P."/>
            <person name="Madeira H.M.F."/>
            <person name="Manfio G.P."/>
            <person name="Maranhao A.Q."/>
            <person name="Martins W.S."/>
            <person name="di Mauro S.M.Z."/>
            <person name="de Medeiros S.R.B."/>
            <person name="Meissner R.V."/>
            <person name="Moreira M.A.M."/>
            <person name="Nascimento F.F."/>
            <person name="Nicolas M.F."/>
            <person name="Oliveira J.G."/>
            <person name="Oliveira S.C."/>
            <person name="Paixao R.F.C."/>
            <person name="Parente J.A."/>
            <person name="Pedrosa F.O."/>
            <person name="Pena S.D.J."/>
            <person name="Pereira J.O."/>
            <person name="Pereira M."/>
            <person name="Pinto L.S.R.C."/>
            <person name="Pinto L.S."/>
            <person name="Porto J.I.R."/>
            <person name="Potrich D.P."/>
            <person name="Ramalho-Neto C.E."/>
            <person name="Reis A.M.M."/>
            <person name="Rigo L.U."/>
            <person name="Rondinelli E."/>
            <person name="Santos E.B.P."/>
            <person name="Santos F.R."/>
            <person name="Schneider M.P.C."/>
            <person name="Seuanez H.N."/>
            <person name="Silva A.M.R."/>
            <person name="da Silva A.L.C."/>
            <person name="Silva D.W."/>
            <person name="Silva R."/>
            <person name="Simoes I.C."/>
            <person name="Simon D."/>
            <person name="Soares C.M.A."/>
            <person name="Soares R.B.A."/>
            <person name="Souza E.M."/>
            <person name="Souza K.R.L."/>
            <person name="Souza R.C."/>
            <person name="Steffens M.B.R."/>
            <person name="Steindel M."/>
            <person name="Teixeira S.R."/>
            <person name="Urmenyi T."/>
            <person name="Vettore A."/>
            <person name="Wassem R."/>
            <person name="Zaha A."/>
            <person name="Simpson A.J.G."/>
        </authorList>
    </citation>
    <scope>NUCLEOTIDE SEQUENCE [LARGE SCALE GENOMIC DNA]</scope>
    <source>
        <strain>ATCC 12472 / DSM 30191 / JCM 1249 / CCUG 213 / NBRC 12614 / NCIMB 9131 / NCTC 9757 / MK</strain>
    </source>
</reference>
<name>SYY_CHRVO</name>
<organism>
    <name type="scientific">Chromobacterium violaceum (strain ATCC 12472 / DSM 30191 / JCM 1249 / CCUG 213 / NBRC 12614 / NCIMB 9131 / NCTC 9757 / MK)</name>
    <dbReference type="NCBI Taxonomy" id="243365"/>
    <lineage>
        <taxon>Bacteria</taxon>
        <taxon>Pseudomonadati</taxon>
        <taxon>Pseudomonadota</taxon>
        <taxon>Betaproteobacteria</taxon>
        <taxon>Neisseriales</taxon>
        <taxon>Chromobacteriaceae</taxon>
        <taxon>Chromobacterium</taxon>
    </lineage>
</organism>
<comment type="function">
    <text evidence="1">Catalyzes the attachment of tyrosine to tRNA(Tyr) in a two-step reaction: tyrosine is first activated by ATP to form Tyr-AMP and then transferred to the acceptor end of tRNA(Tyr).</text>
</comment>
<comment type="catalytic activity">
    <reaction evidence="1">
        <text>tRNA(Tyr) + L-tyrosine + ATP = L-tyrosyl-tRNA(Tyr) + AMP + diphosphate + H(+)</text>
        <dbReference type="Rhea" id="RHEA:10220"/>
        <dbReference type="Rhea" id="RHEA-COMP:9706"/>
        <dbReference type="Rhea" id="RHEA-COMP:9707"/>
        <dbReference type="ChEBI" id="CHEBI:15378"/>
        <dbReference type="ChEBI" id="CHEBI:30616"/>
        <dbReference type="ChEBI" id="CHEBI:33019"/>
        <dbReference type="ChEBI" id="CHEBI:58315"/>
        <dbReference type="ChEBI" id="CHEBI:78442"/>
        <dbReference type="ChEBI" id="CHEBI:78536"/>
        <dbReference type="ChEBI" id="CHEBI:456215"/>
        <dbReference type="EC" id="6.1.1.1"/>
    </reaction>
</comment>
<comment type="subunit">
    <text evidence="1">Homodimer.</text>
</comment>
<comment type="subcellular location">
    <subcellularLocation>
        <location evidence="1">Cytoplasm</location>
    </subcellularLocation>
</comment>
<comment type="similarity">
    <text evidence="1">Belongs to the class-I aminoacyl-tRNA synthetase family. TyrS type 1 subfamily.</text>
</comment>
<keyword id="KW-0030">Aminoacyl-tRNA synthetase</keyword>
<keyword id="KW-0067">ATP-binding</keyword>
<keyword id="KW-0963">Cytoplasm</keyword>
<keyword id="KW-0436">Ligase</keyword>
<keyword id="KW-0547">Nucleotide-binding</keyword>
<keyword id="KW-0648">Protein biosynthesis</keyword>
<keyword id="KW-1185">Reference proteome</keyword>
<keyword id="KW-0694">RNA-binding</keyword>
<feature type="chain" id="PRO_0000234696" description="Tyrosine--tRNA ligase">
    <location>
        <begin position="1"/>
        <end position="424"/>
    </location>
</feature>
<feature type="domain" description="S4 RNA-binding" evidence="1">
    <location>
        <begin position="357"/>
        <end position="422"/>
    </location>
</feature>
<feature type="short sequence motif" description="'HIGH' region">
    <location>
        <begin position="42"/>
        <end position="51"/>
    </location>
</feature>
<feature type="short sequence motif" description="'KMSKS' region">
    <location>
        <begin position="234"/>
        <end position="238"/>
    </location>
</feature>
<feature type="binding site" evidence="1">
    <location>
        <position position="37"/>
    </location>
    <ligand>
        <name>L-tyrosine</name>
        <dbReference type="ChEBI" id="CHEBI:58315"/>
    </ligand>
</feature>
<feature type="binding site" evidence="1">
    <location>
        <position position="174"/>
    </location>
    <ligand>
        <name>L-tyrosine</name>
        <dbReference type="ChEBI" id="CHEBI:58315"/>
    </ligand>
</feature>
<feature type="binding site" evidence="1">
    <location>
        <position position="178"/>
    </location>
    <ligand>
        <name>L-tyrosine</name>
        <dbReference type="ChEBI" id="CHEBI:58315"/>
    </ligand>
</feature>
<feature type="binding site" evidence="1">
    <location>
        <position position="237"/>
    </location>
    <ligand>
        <name>ATP</name>
        <dbReference type="ChEBI" id="CHEBI:30616"/>
    </ligand>
</feature>
<dbReference type="EC" id="6.1.1.1" evidence="1"/>
<dbReference type="EMBL" id="AE016825">
    <property type="protein sequence ID" value="AAQ60741.1"/>
    <property type="molecule type" value="Genomic_DNA"/>
</dbReference>
<dbReference type="RefSeq" id="WP_011136619.1">
    <property type="nucleotide sequence ID" value="NC_005085.1"/>
</dbReference>
<dbReference type="SMR" id="Q7NTI2"/>
<dbReference type="STRING" id="243365.CV_3072"/>
<dbReference type="KEGG" id="cvi:CV_3072"/>
<dbReference type="eggNOG" id="COG0162">
    <property type="taxonomic scope" value="Bacteria"/>
</dbReference>
<dbReference type="HOGENOM" id="CLU_024003_0_3_4"/>
<dbReference type="OrthoDB" id="9804243at2"/>
<dbReference type="Proteomes" id="UP000001424">
    <property type="component" value="Chromosome"/>
</dbReference>
<dbReference type="GO" id="GO:0005829">
    <property type="term" value="C:cytosol"/>
    <property type="evidence" value="ECO:0007669"/>
    <property type="project" value="TreeGrafter"/>
</dbReference>
<dbReference type="GO" id="GO:0005524">
    <property type="term" value="F:ATP binding"/>
    <property type="evidence" value="ECO:0007669"/>
    <property type="project" value="UniProtKB-UniRule"/>
</dbReference>
<dbReference type="GO" id="GO:0003723">
    <property type="term" value="F:RNA binding"/>
    <property type="evidence" value="ECO:0007669"/>
    <property type="project" value="UniProtKB-KW"/>
</dbReference>
<dbReference type="GO" id="GO:0004831">
    <property type="term" value="F:tyrosine-tRNA ligase activity"/>
    <property type="evidence" value="ECO:0007669"/>
    <property type="project" value="UniProtKB-UniRule"/>
</dbReference>
<dbReference type="GO" id="GO:0006437">
    <property type="term" value="P:tyrosyl-tRNA aminoacylation"/>
    <property type="evidence" value="ECO:0007669"/>
    <property type="project" value="UniProtKB-UniRule"/>
</dbReference>
<dbReference type="CDD" id="cd00165">
    <property type="entry name" value="S4"/>
    <property type="match status" value="1"/>
</dbReference>
<dbReference type="CDD" id="cd00805">
    <property type="entry name" value="TyrRS_core"/>
    <property type="match status" value="1"/>
</dbReference>
<dbReference type="FunFam" id="1.10.240.10:FF:000001">
    <property type="entry name" value="Tyrosine--tRNA ligase"/>
    <property type="match status" value="1"/>
</dbReference>
<dbReference type="FunFam" id="3.40.50.620:FF:000008">
    <property type="entry name" value="Tyrosine--tRNA ligase"/>
    <property type="match status" value="1"/>
</dbReference>
<dbReference type="Gene3D" id="3.40.50.620">
    <property type="entry name" value="HUPs"/>
    <property type="match status" value="1"/>
</dbReference>
<dbReference type="Gene3D" id="3.10.290.10">
    <property type="entry name" value="RNA-binding S4 domain"/>
    <property type="match status" value="1"/>
</dbReference>
<dbReference type="Gene3D" id="1.10.240.10">
    <property type="entry name" value="Tyrosyl-Transfer RNA Synthetase"/>
    <property type="match status" value="1"/>
</dbReference>
<dbReference type="HAMAP" id="MF_02006">
    <property type="entry name" value="Tyr_tRNA_synth_type1"/>
    <property type="match status" value="1"/>
</dbReference>
<dbReference type="InterPro" id="IPR002305">
    <property type="entry name" value="aa-tRNA-synth_Ic"/>
</dbReference>
<dbReference type="InterPro" id="IPR014729">
    <property type="entry name" value="Rossmann-like_a/b/a_fold"/>
</dbReference>
<dbReference type="InterPro" id="IPR002942">
    <property type="entry name" value="S4_RNA-bd"/>
</dbReference>
<dbReference type="InterPro" id="IPR036986">
    <property type="entry name" value="S4_RNA-bd_sf"/>
</dbReference>
<dbReference type="InterPro" id="IPR054608">
    <property type="entry name" value="SYY-like_C"/>
</dbReference>
<dbReference type="InterPro" id="IPR002307">
    <property type="entry name" value="Tyr-tRNA-ligase"/>
</dbReference>
<dbReference type="InterPro" id="IPR024088">
    <property type="entry name" value="Tyr-tRNA-ligase_bac-type"/>
</dbReference>
<dbReference type="InterPro" id="IPR024107">
    <property type="entry name" value="Tyr-tRNA-ligase_bac_1"/>
</dbReference>
<dbReference type="NCBIfam" id="TIGR00234">
    <property type="entry name" value="tyrS"/>
    <property type="match status" value="1"/>
</dbReference>
<dbReference type="PANTHER" id="PTHR11766:SF0">
    <property type="entry name" value="TYROSINE--TRNA LIGASE, MITOCHONDRIAL"/>
    <property type="match status" value="1"/>
</dbReference>
<dbReference type="PANTHER" id="PTHR11766">
    <property type="entry name" value="TYROSYL-TRNA SYNTHETASE"/>
    <property type="match status" value="1"/>
</dbReference>
<dbReference type="Pfam" id="PF22421">
    <property type="entry name" value="SYY_C-terminal"/>
    <property type="match status" value="1"/>
</dbReference>
<dbReference type="Pfam" id="PF00579">
    <property type="entry name" value="tRNA-synt_1b"/>
    <property type="match status" value="1"/>
</dbReference>
<dbReference type="PRINTS" id="PR01040">
    <property type="entry name" value="TRNASYNTHTYR"/>
</dbReference>
<dbReference type="SMART" id="SM00363">
    <property type="entry name" value="S4"/>
    <property type="match status" value="1"/>
</dbReference>
<dbReference type="SUPFAM" id="SSF55174">
    <property type="entry name" value="Alpha-L RNA-binding motif"/>
    <property type="match status" value="1"/>
</dbReference>
<dbReference type="SUPFAM" id="SSF52374">
    <property type="entry name" value="Nucleotidylyl transferase"/>
    <property type="match status" value="1"/>
</dbReference>
<dbReference type="PROSITE" id="PS50889">
    <property type="entry name" value="S4"/>
    <property type="match status" value="1"/>
</dbReference>
<evidence type="ECO:0000255" key="1">
    <source>
        <dbReference type="HAMAP-Rule" id="MF_02006"/>
    </source>
</evidence>
<proteinExistence type="inferred from homology"/>
<accession>Q7NTI2</accession>